<accession>Q9SZ92</accession>
<accession>Q8L9C6</accession>
<accession>Q8LF42</accession>
<dbReference type="EC" id="2.7.1.32"/>
<dbReference type="EMBL" id="AL049482">
    <property type="protein sequence ID" value="CAB39643.1"/>
    <property type="molecule type" value="Genomic_DNA"/>
</dbReference>
<dbReference type="EMBL" id="AL161515">
    <property type="protein sequence ID" value="CAB78099.1"/>
    <property type="molecule type" value="Genomic_DNA"/>
</dbReference>
<dbReference type="EMBL" id="CP002687">
    <property type="protein sequence ID" value="AEE82792.1"/>
    <property type="molecule type" value="Genomic_DNA"/>
</dbReference>
<dbReference type="EMBL" id="CP002687">
    <property type="protein sequence ID" value="AEE82793.1"/>
    <property type="molecule type" value="Genomic_DNA"/>
</dbReference>
<dbReference type="EMBL" id="AY085061">
    <property type="protein sequence ID" value="AAM61617.1"/>
    <property type="molecule type" value="mRNA"/>
</dbReference>
<dbReference type="EMBL" id="AY088512">
    <property type="protein sequence ID" value="AAM66047.1"/>
    <property type="molecule type" value="mRNA"/>
</dbReference>
<dbReference type="PIR" id="T04023">
    <property type="entry name" value="T04023"/>
</dbReference>
<dbReference type="RefSeq" id="NP_192714.1">
    <molecule id="Q9SZ92-1"/>
    <property type="nucleotide sequence ID" value="NM_117044.3"/>
</dbReference>
<dbReference type="RefSeq" id="NP_849350.1">
    <molecule id="Q9SZ92-1"/>
    <property type="nucleotide sequence ID" value="NM_179019.1"/>
</dbReference>
<dbReference type="SMR" id="Q9SZ92"/>
<dbReference type="FunCoup" id="Q9SZ92">
    <property type="interactions" value="54"/>
</dbReference>
<dbReference type="STRING" id="3702.Q9SZ92"/>
<dbReference type="PaxDb" id="3702-AT4G09760.1"/>
<dbReference type="ProteomicsDB" id="246808">
    <molecule id="Q9SZ92-1"/>
</dbReference>
<dbReference type="DNASU" id="826564"/>
<dbReference type="EnsemblPlants" id="AT4G09760.1">
    <molecule id="Q9SZ92-1"/>
    <property type="protein sequence ID" value="AT4G09760.1"/>
    <property type="gene ID" value="AT4G09760"/>
</dbReference>
<dbReference type="EnsemblPlants" id="AT4G09760.2">
    <molecule id="Q9SZ92-1"/>
    <property type="protein sequence ID" value="AT4G09760.2"/>
    <property type="gene ID" value="AT4G09760"/>
</dbReference>
<dbReference type="GeneID" id="826564"/>
<dbReference type="Gramene" id="AT4G09760.1">
    <molecule id="Q9SZ92-1"/>
    <property type="protein sequence ID" value="AT4G09760.1"/>
    <property type="gene ID" value="AT4G09760"/>
</dbReference>
<dbReference type="Gramene" id="AT4G09760.2">
    <molecule id="Q9SZ92-1"/>
    <property type="protein sequence ID" value="AT4G09760.2"/>
    <property type="gene ID" value="AT4G09760"/>
</dbReference>
<dbReference type="KEGG" id="ath:AT4G09760"/>
<dbReference type="Araport" id="AT4G09760"/>
<dbReference type="TAIR" id="AT4G09760">
    <property type="gene designation" value="CEK3"/>
</dbReference>
<dbReference type="eggNOG" id="KOG2686">
    <property type="taxonomic scope" value="Eukaryota"/>
</dbReference>
<dbReference type="HOGENOM" id="CLU_012712_0_2_1"/>
<dbReference type="InParanoid" id="Q9SZ92"/>
<dbReference type="OMA" id="NHKEGMV"/>
<dbReference type="PhylomeDB" id="Q9SZ92"/>
<dbReference type="BRENDA" id="2.7.1.32">
    <property type="organism ID" value="399"/>
</dbReference>
<dbReference type="UniPathway" id="UPA00753">
    <property type="reaction ID" value="UER00737"/>
</dbReference>
<dbReference type="PRO" id="PR:Q9SZ92"/>
<dbReference type="Proteomes" id="UP000006548">
    <property type="component" value="Chromosome 4"/>
</dbReference>
<dbReference type="ExpressionAtlas" id="Q9SZ92">
    <property type="expression patterns" value="baseline and differential"/>
</dbReference>
<dbReference type="GO" id="GO:0005524">
    <property type="term" value="F:ATP binding"/>
    <property type="evidence" value="ECO:0007669"/>
    <property type="project" value="UniProtKB-KW"/>
</dbReference>
<dbReference type="GO" id="GO:0004103">
    <property type="term" value="F:choline kinase activity"/>
    <property type="evidence" value="ECO:0007669"/>
    <property type="project" value="UniProtKB-EC"/>
</dbReference>
<dbReference type="CDD" id="cd05157">
    <property type="entry name" value="ETNK_euk"/>
    <property type="match status" value="1"/>
</dbReference>
<dbReference type="Gene3D" id="3.90.1200.10">
    <property type="match status" value="1"/>
</dbReference>
<dbReference type="Gene3D" id="3.30.200.20">
    <property type="entry name" value="Phosphorylase Kinase, domain 1"/>
    <property type="match status" value="1"/>
</dbReference>
<dbReference type="InterPro" id="IPR011009">
    <property type="entry name" value="Kinase-like_dom_sf"/>
</dbReference>
<dbReference type="PANTHER" id="PTHR22603:SF75">
    <property type="entry name" value="CHOLINE KINASE 3-RELATED"/>
    <property type="match status" value="1"/>
</dbReference>
<dbReference type="PANTHER" id="PTHR22603">
    <property type="entry name" value="CHOLINE/ETHANOALAMINE KINASE"/>
    <property type="match status" value="1"/>
</dbReference>
<dbReference type="Pfam" id="PF01633">
    <property type="entry name" value="Choline_kinase"/>
    <property type="match status" value="1"/>
</dbReference>
<dbReference type="SUPFAM" id="SSF56112">
    <property type="entry name" value="Protein kinase-like (PK-like)"/>
    <property type="match status" value="1"/>
</dbReference>
<keyword id="KW-0025">Alternative splicing</keyword>
<keyword id="KW-0067">ATP-binding</keyword>
<keyword id="KW-0418">Kinase</keyword>
<keyword id="KW-0444">Lipid biosynthesis</keyword>
<keyword id="KW-0443">Lipid metabolism</keyword>
<keyword id="KW-0547">Nucleotide-binding</keyword>
<keyword id="KW-0594">Phospholipid biosynthesis</keyword>
<keyword id="KW-1208">Phospholipid metabolism</keyword>
<keyword id="KW-1185">Reference proteome</keyword>
<keyword id="KW-0808">Transferase</keyword>
<evidence type="ECO:0000250" key="1"/>
<evidence type="ECO:0000269" key="2">
    <source>
    </source>
</evidence>
<evidence type="ECO:0000305" key="3"/>
<name>CK3_ARATH</name>
<comment type="function">
    <text evidence="1">Involved in phospholipid biosynthesis. Catalyzes the first step in phosphatidylcholine biosynthesis (By similarity).</text>
</comment>
<comment type="catalytic activity">
    <reaction>
        <text>choline + ATP = phosphocholine + ADP + H(+)</text>
        <dbReference type="Rhea" id="RHEA:12837"/>
        <dbReference type="ChEBI" id="CHEBI:15354"/>
        <dbReference type="ChEBI" id="CHEBI:15378"/>
        <dbReference type="ChEBI" id="CHEBI:30616"/>
        <dbReference type="ChEBI" id="CHEBI:295975"/>
        <dbReference type="ChEBI" id="CHEBI:456216"/>
        <dbReference type="EC" id="2.7.1.32"/>
    </reaction>
</comment>
<comment type="pathway">
    <text>Phospholipid metabolism; phosphatidylcholine biosynthesis; phosphocholine from choline: step 1/1.</text>
</comment>
<comment type="alternative products">
    <event type="alternative splicing"/>
    <isoform>
        <id>Q9SZ92-1</id>
        <name>1</name>
        <sequence type="displayed"/>
    </isoform>
    <text>A number of isoforms are produced. According to EST sequences.</text>
</comment>
<comment type="induction">
    <text evidence="2">By wounding, and salt and osmotic stresses.</text>
</comment>
<comment type="similarity">
    <text evidence="3">Belongs to the choline/ethanolamine kinase family.</text>
</comment>
<proteinExistence type="evidence at transcript level"/>
<organism>
    <name type="scientific">Arabidopsis thaliana</name>
    <name type="common">Mouse-ear cress</name>
    <dbReference type="NCBI Taxonomy" id="3702"/>
    <lineage>
        <taxon>Eukaryota</taxon>
        <taxon>Viridiplantae</taxon>
        <taxon>Streptophyta</taxon>
        <taxon>Embryophyta</taxon>
        <taxon>Tracheophyta</taxon>
        <taxon>Spermatophyta</taxon>
        <taxon>Magnoliopsida</taxon>
        <taxon>eudicotyledons</taxon>
        <taxon>Gunneridae</taxon>
        <taxon>Pentapetalae</taxon>
        <taxon>rosids</taxon>
        <taxon>malvids</taxon>
        <taxon>Brassicales</taxon>
        <taxon>Brassicaceae</taxon>
        <taxon>Camelineae</taxon>
        <taxon>Arabidopsis</taxon>
    </lineage>
</organism>
<feature type="chain" id="PRO_0000423348" description="Probable choline kinase 3">
    <location>
        <begin position="1"/>
        <end position="346"/>
    </location>
</feature>
<feature type="binding site" evidence="1">
    <location>
        <position position="71"/>
    </location>
    <ligand>
        <name>ATP</name>
        <dbReference type="ChEBI" id="CHEBI:30616"/>
    </ligand>
</feature>
<feature type="binding site" evidence="1">
    <location>
        <position position="207"/>
    </location>
    <ligand>
        <name>ATP</name>
        <dbReference type="ChEBI" id="CHEBI:30616"/>
    </ligand>
</feature>
<feature type="binding site" evidence="1">
    <location>
        <position position="224"/>
    </location>
    <ligand>
        <name>ATP</name>
        <dbReference type="ChEBI" id="CHEBI:30616"/>
    </ligand>
</feature>
<feature type="sequence conflict" description="In Ref. 3; AAM66047." evidence="3" ref="3">
    <original>RCRK</original>
    <variation>QCRN</variation>
    <location>
        <begin position="64"/>
        <end position="67"/>
    </location>
</feature>
<feature type="sequence conflict" description="In Ref. 3; AAM61617." evidence="3" ref="3">
    <original>I</original>
    <variation>T</variation>
    <location>
        <position position="151"/>
    </location>
</feature>
<feature type="sequence conflict" description="In Ref. 3; AAM61617." evidence="3" ref="3">
    <original>T</original>
    <variation>S</variation>
    <location>
        <position position="175"/>
    </location>
</feature>
<feature type="sequence conflict" description="In Ref. 3; AAM61617." evidence="3" ref="3">
    <original>DIE</original>
    <variation>CID</variation>
    <location>
        <begin position="181"/>
        <end position="183"/>
    </location>
</feature>
<feature type="sequence conflict" description="In Ref. 3; AAM66047." evidence="3" ref="3">
    <original>A</original>
    <variation>T</variation>
    <location>
        <position position="219"/>
    </location>
</feature>
<feature type="sequence conflict" description="In Ref. 3; AAM61617." evidence="3" ref="3">
    <original>E</original>
    <variation>D</variation>
    <location>
        <position position="288"/>
    </location>
</feature>
<feature type="sequence conflict" description="In Ref. 3; AAM61617." evidence="3" ref="3">
    <original>F</original>
    <variation>Y</variation>
    <location>
        <position position="344"/>
    </location>
</feature>
<gene>
    <name type="ordered locus">At4g09760</name>
    <name type="ORF">F17A8.110</name>
</gene>
<protein>
    <recommendedName>
        <fullName>Probable choline kinase 3</fullName>
        <ecNumber>2.7.1.32</ecNumber>
    </recommendedName>
</protein>
<sequence>MAVGIFGLIPSSSPDELRKILQALSTKWGDVVEDFESLEVKPMKGAMTNEVFMVSWPRKETNLRCRKLLVRVYGEGVELFFNRDDEIRTFEYVARHGHGPTLLGRFAGGRVEEFIHARTLSATDLRDPNISALVASKLRRFHSIHIPGDRIMLIWDRMRTWVGQAKNLCSNEHSTEFGLDDIEDEINLLEQEVNNEQEIGFCHNDLQYGNIMIDEETNAITIIDYEYASYNPIAYDIANHFCEMAADYHSNTPHILDYTLYPGEEERRRFICNYLTSSGEEAREEDIEQLLDDIEKYTLASHLFWGLWGIISGYVNKIEFDYIEYSRQRFKQYWLRKPKLLSFFPS</sequence>
<reference key="1">
    <citation type="journal article" date="1999" name="Nature">
        <title>Sequence and analysis of chromosome 4 of the plant Arabidopsis thaliana.</title>
        <authorList>
            <person name="Mayer K.F.X."/>
            <person name="Schueller C."/>
            <person name="Wambutt R."/>
            <person name="Murphy G."/>
            <person name="Volckaert G."/>
            <person name="Pohl T."/>
            <person name="Duesterhoeft A."/>
            <person name="Stiekema W."/>
            <person name="Entian K.-D."/>
            <person name="Terryn N."/>
            <person name="Harris B."/>
            <person name="Ansorge W."/>
            <person name="Brandt P."/>
            <person name="Grivell L.A."/>
            <person name="Rieger M."/>
            <person name="Weichselgartner M."/>
            <person name="de Simone V."/>
            <person name="Obermaier B."/>
            <person name="Mache R."/>
            <person name="Mueller M."/>
            <person name="Kreis M."/>
            <person name="Delseny M."/>
            <person name="Puigdomenech P."/>
            <person name="Watson M."/>
            <person name="Schmidtheini T."/>
            <person name="Reichert B."/>
            <person name="Portetelle D."/>
            <person name="Perez-Alonso M."/>
            <person name="Boutry M."/>
            <person name="Bancroft I."/>
            <person name="Vos P."/>
            <person name="Hoheisel J."/>
            <person name="Zimmermann W."/>
            <person name="Wedler H."/>
            <person name="Ridley P."/>
            <person name="Langham S.-A."/>
            <person name="McCullagh B."/>
            <person name="Bilham L."/>
            <person name="Robben J."/>
            <person name="van der Schueren J."/>
            <person name="Grymonprez B."/>
            <person name="Chuang Y.-J."/>
            <person name="Vandenbussche F."/>
            <person name="Braeken M."/>
            <person name="Weltjens I."/>
            <person name="Voet M."/>
            <person name="Bastiaens I."/>
            <person name="Aert R."/>
            <person name="Defoor E."/>
            <person name="Weitzenegger T."/>
            <person name="Bothe G."/>
            <person name="Ramsperger U."/>
            <person name="Hilbert H."/>
            <person name="Braun M."/>
            <person name="Holzer E."/>
            <person name="Brandt A."/>
            <person name="Peters S."/>
            <person name="van Staveren M."/>
            <person name="Dirkse W."/>
            <person name="Mooijman P."/>
            <person name="Klein Lankhorst R."/>
            <person name="Rose M."/>
            <person name="Hauf J."/>
            <person name="Koetter P."/>
            <person name="Berneiser S."/>
            <person name="Hempel S."/>
            <person name="Feldpausch M."/>
            <person name="Lamberth S."/>
            <person name="Van den Daele H."/>
            <person name="De Keyser A."/>
            <person name="Buysshaert C."/>
            <person name="Gielen J."/>
            <person name="Villarroel R."/>
            <person name="De Clercq R."/>
            <person name="van Montagu M."/>
            <person name="Rogers J."/>
            <person name="Cronin A."/>
            <person name="Quail M.A."/>
            <person name="Bray-Allen S."/>
            <person name="Clark L."/>
            <person name="Doggett J."/>
            <person name="Hall S."/>
            <person name="Kay M."/>
            <person name="Lennard N."/>
            <person name="McLay K."/>
            <person name="Mayes R."/>
            <person name="Pettett A."/>
            <person name="Rajandream M.A."/>
            <person name="Lyne M."/>
            <person name="Benes V."/>
            <person name="Rechmann S."/>
            <person name="Borkova D."/>
            <person name="Bloecker H."/>
            <person name="Scharfe M."/>
            <person name="Grimm M."/>
            <person name="Loehnert T.-H."/>
            <person name="Dose S."/>
            <person name="de Haan M."/>
            <person name="Maarse A.C."/>
            <person name="Schaefer M."/>
            <person name="Mueller-Auer S."/>
            <person name="Gabel C."/>
            <person name="Fuchs M."/>
            <person name="Fartmann B."/>
            <person name="Granderath K."/>
            <person name="Dauner D."/>
            <person name="Herzl A."/>
            <person name="Neumann S."/>
            <person name="Argiriou A."/>
            <person name="Vitale D."/>
            <person name="Liguori R."/>
            <person name="Piravandi E."/>
            <person name="Massenet O."/>
            <person name="Quigley F."/>
            <person name="Clabauld G."/>
            <person name="Muendlein A."/>
            <person name="Felber R."/>
            <person name="Schnabl S."/>
            <person name="Hiller R."/>
            <person name="Schmidt W."/>
            <person name="Lecharny A."/>
            <person name="Aubourg S."/>
            <person name="Chefdor F."/>
            <person name="Cooke R."/>
            <person name="Berger C."/>
            <person name="Monfort A."/>
            <person name="Casacuberta E."/>
            <person name="Gibbons T."/>
            <person name="Weber N."/>
            <person name="Vandenbol M."/>
            <person name="Bargues M."/>
            <person name="Terol J."/>
            <person name="Torres A."/>
            <person name="Perez-Perez A."/>
            <person name="Purnelle B."/>
            <person name="Bent E."/>
            <person name="Johnson S."/>
            <person name="Tacon D."/>
            <person name="Jesse T."/>
            <person name="Heijnen L."/>
            <person name="Schwarz S."/>
            <person name="Scholler P."/>
            <person name="Heber S."/>
            <person name="Francs P."/>
            <person name="Bielke C."/>
            <person name="Frishman D."/>
            <person name="Haase D."/>
            <person name="Lemcke K."/>
            <person name="Mewes H.-W."/>
            <person name="Stocker S."/>
            <person name="Zaccaria P."/>
            <person name="Bevan M."/>
            <person name="Wilson R.K."/>
            <person name="de la Bastide M."/>
            <person name="Habermann K."/>
            <person name="Parnell L."/>
            <person name="Dedhia N."/>
            <person name="Gnoj L."/>
            <person name="Schutz K."/>
            <person name="Huang E."/>
            <person name="Spiegel L."/>
            <person name="Sekhon M."/>
            <person name="Murray J."/>
            <person name="Sheet P."/>
            <person name="Cordes M."/>
            <person name="Abu-Threideh J."/>
            <person name="Stoneking T."/>
            <person name="Kalicki J."/>
            <person name="Graves T."/>
            <person name="Harmon G."/>
            <person name="Edwards J."/>
            <person name="Latreille P."/>
            <person name="Courtney L."/>
            <person name="Cloud J."/>
            <person name="Abbott A."/>
            <person name="Scott K."/>
            <person name="Johnson D."/>
            <person name="Minx P."/>
            <person name="Bentley D."/>
            <person name="Fulton B."/>
            <person name="Miller N."/>
            <person name="Greco T."/>
            <person name="Kemp K."/>
            <person name="Kramer J."/>
            <person name="Fulton L."/>
            <person name="Mardis E."/>
            <person name="Dante M."/>
            <person name="Pepin K."/>
            <person name="Hillier L.W."/>
            <person name="Nelson J."/>
            <person name="Spieth J."/>
            <person name="Ryan E."/>
            <person name="Andrews S."/>
            <person name="Geisel C."/>
            <person name="Layman D."/>
            <person name="Du H."/>
            <person name="Ali J."/>
            <person name="Berghoff A."/>
            <person name="Jones K."/>
            <person name="Drone K."/>
            <person name="Cotton M."/>
            <person name="Joshu C."/>
            <person name="Antonoiu B."/>
            <person name="Zidanic M."/>
            <person name="Strong C."/>
            <person name="Sun H."/>
            <person name="Lamar B."/>
            <person name="Yordan C."/>
            <person name="Ma P."/>
            <person name="Zhong J."/>
            <person name="Preston R."/>
            <person name="Vil D."/>
            <person name="Shekher M."/>
            <person name="Matero A."/>
            <person name="Shah R."/>
            <person name="Swaby I.K."/>
            <person name="O'Shaughnessy A."/>
            <person name="Rodriguez M."/>
            <person name="Hoffman J."/>
            <person name="Till S."/>
            <person name="Granat S."/>
            <person name="Shohdy N."/>
            <person name="Hasegawa A."/>
            <person name="Hameed A."/>
            <person name="Lodhi M."/>
            <person name="Johnson A."/>
            <person name="Chen E."/>
            <person name="Marra M.A."/>
            <person name="Martienssen R."/>
            <person name="McCombie W.R."/>
        </authorList>
    </citation>
    <scope>NUCLEOTIDE SEQUENCE [LARGE SCALE GENOMIC DNA]</scope>
    <source>
        <strain>cv. Columbia</strain>
    </source>
</reference>
<reference key="2">
    <citation type="journal article" date="2017" name="Plant J.">
        <title>Araport11: a complete reannotation of the Arabidopsis thaliana reference genome.</title>
        <authorList>
            <person name="Cheng C.Y."/>
            <person name="Krishnakumar V."/>
            <person name="Chan A.P."/>
            <person name="Thibaud-Nissen F."/>
            <person name="Schobel S."/>
            <person name="Town C.D."/>
        </authorList>
    </citation>
    <scope>GENOME REANNOTATION</scope>
    <source>
        <strain>cv. Columbia</strain>
    </source>
</reference>
<reference key="3">
    <citation type="submission" date="2002-03" db="EMBL/GenBank/DDBJ databases">
        <title>Full-length cDNA from Arabidopsis thaliana.</title>
        <authorList>
            <person name="Brover V.V."/>
            <person name="Troukhan M.E."/>
            <person name="Alexandrov N.A."/>
            <person name="Lu Y.-P."/>
            <person name="Flavell R.B."/>
            <person name="Feldmann K.A."/>
        </authorList>
    </citation>
    <scope>NUCLEOTIDE SEQUENCE [LARGE SCALE MRNA]</scope>
</reference>
<reference key="4">
    <citation type="journal article" date="2004" name="FEBS Lett.">
        <title>Regulation of phosphatidylcholine biosynthesis under salt stress involves choline kinases in Arabidopsis thaliana.</title>
        <authorList>
            <person name="Tasseva G."/>
            <person name="Richard L."/>
            <person name="Zachowski A."/>
        </authorList>
    </citation>
    <scope>INDUCTION</scope>
</reference>